<gene>
    <name evidence="6" type="primary">XynB</name>
</gene>
<dbReference type="EC" id="3.2.1.8" evidence="4"/>
<dbReference type="EMBL" id="JX543529">
    <property type="protein sequence ID" value="AGG68960.1"/>
    <property type="molecule type" value="mRNA"/>
</dbReference>
<dbReference type="UniPathway" id="UPA00114"/>
<dbReference type="GO" id="GO:0005576">
    <property type="term" value="C:extracellular region"/>
    <property type="evidence" value="ECO:0007669"/>
    <property type="project" value="UniProtKB-SubCell"/>
</dbReference>
<dbReference type="GO" id="GO:0031176">
    <property type="term" value="F:endo-1,4-beta-xylanase activity"/>
    <property type="evidence" value="ECO:0007669"/>
    <property type="project" value="UniProtKB-EC"/>
</dbReference>
<dbReference type="GO" id="GO:0045493">
    <property type="term" value="P:xylan catabolic process"/>
    <property type="evidence" value="ECO:0007669"/>
    <property type="project" value="UniProtKB-KW"/>
</dbReference>
<dbReference type="Gene3D" id="3.20.20.80">
    <property type="entry name" value="Glycosidases"/>
    <property type="match status" value="1"/>
</dbReference>
<dbReference type="InterPro" id="IPR044846">
    <property type="entry name" value="GH10"/>
</dbReference>
<dbReference type="InterPro" id="IPR001000">
    <property type="entry name" value="GH10_dom"/>
</dbReference>
<dbReference type="InterPro" id="IPR017853">
    <property type="entry name" value="Glycoside_hydrolase_SF"/>
</dbReference>
<dbReference type="PANTHER" id="PTHR31490:SF35">
    <property type="entry name" value="ENDO-1,4-BETA-XYLANASE"/>
    <property type="match status" value="1"/>
</dbReference>
<dbReference type="PANTHER" id="PTHR31490">
    <property type="entry name" value="GLYCOSYL HYDROLASE"/>
    <property type="match status" value="1"/>
</dbReference>
<dbReference type="Pfam" id="PF00331">
    <property type="entry name" value="Glyco_hydro_10"/>
    <property type="match status" value="1"/>
</dbReference>
<dbReference type="PRINTS" id="PR00134">
    <property type="entry name" value="GLHYDRLASE10"/>
</dbReference>
<dbReference type="SMART" id="SM00633">
    <property type="entry name" value="Glyco_10"/>
    <property type="match status" value="1"/>
</dbReference>
<dbReference type="SUPFAM" id="SSF51445">
    <property type="entry name" value="(Trans)glycosidases"/>
    <property type="match status" value="1"/>
</dbReference>
<dbReference type="PROSITE" id="PS51760">
    <property type="entry name" value="GH10_2"/>
    <property type="match status" value="1"/>
</dbReference>
<comment type="function">
    <text evidence="4">Endo-1,4-beta-xylanase involved in the hydrolysis of xylan, a major structural heterogeneous polysaccharide found in plant biomass representing the second most abundant polysaccharide in the biosphere, after cellulose (PubMed:23306124). Is more active on soluble wheat arabinoxylan (defined as 100%) than on birchwood xylan (75.4%) and beechwood xylan (70.8%), and less active on insoluble wheat arabinoxylan (17.4%) (PubMed:23306124). Xylose is the major hydrolysis product of XynB (PubMed:23306124).</text>
</comment>
<comment type="catalytic activity">
    <reaction evidence="4">
        <text>Endohydrolysis of (1-&gt;4)-beta-D-xylosidic linkages in xylans.</text>
        <dbReference type="EC" id="3.2.1.8"/>
    </reaction>
</comment>
<comment type="activity regulation">
    <text evidence="4">Partial inhibition of activity is detected in the presence of Ag(+), Cu2(+) and SDS. Like most fungal xylanases, activity is completely inhibited by Hg(2+) since Hg(2+) could interact with tryptophan residues and oxidize the indole ring (PubMed:23306124). Beta-mercaptoethanol enhances the enzymatic activity by counteracting the oxidation effects of the S-S linkage between cysteine residues (PubMed:23306124).</text>
</comment>
<comment type="biophysicochemical properties">
    <kinetics>
        <KM evidence="4">1.1 mM for birchwood xylan</KM>
        <Vmax evidence="4">306.8 umol/min/mg enzyme towards birchwood xylan</Vmax>
    </kinetics>
    <phDependence>
        <text evidence="4">Optimum pH is 7.0.</text>
    </phDependence>
    <temperatureDependence>
        <text evidence="4">Optimum temperature is 70 degrees Celsius.</text>
    </temperatureDependence>
</comment>
<comment type="pathway">
    <text evidence="4">Glycan degradation; xylan degradation.</text>
</comment>
<comment type="subcellular location">
    <subcellularLocation>
        <location evidence="8">Secreted</location>
    </subcellularLocation>
</comment>
<comment type="induction">
    <text evidence="5">Expression is inhibited by the transcription factor CreA in the presence of glucose.</text>
</comment>
<comment type="biotechnology">
    <text evidence="4">Considering the detergent and textile solutions that are neutral to alkaline and must be tolerant to high temperatures and SDS, the three xylanases XynA, XynB and XynC having such favorable properties might represent potential candidates in the detergent and textile industries (PubMed:23306124). Together with their wide substrate specificities, the XynA, XynB and XynC thermophilic xylanases could also be of considerable commercial interest in various other industries, especially in the brewing industry (PubMed:23306124).</text>
</comment>
<comment type="similarity">
    <text evidence="7">Belongs to the glycosyl hydrolase 10 (cellulase F) family.</text>
</comment>
<accession>M4MLB5</accession>
<sequence length="358" mass="40397">MRFSASLLLALTGSAAASPIRAEEEIRVYDLPISLFDDLQGLDAAMKAAGREYIGTSLTVRNDFQEQNIIRTEFGSITPENAQKWDATEPNRGQFTFGSADQHMDWARQNGKHVRCHTLVWYSQLPGWVSNSGFNNATLQQVMQNHINQVMGRYRGRCNHWDVVNEAPRLMAMRLQIGEAYIPIAFRMAAQADPSAKLYYNDYNLEYLGPKVEGAARIVRLVKQYGARIDGVGYQAHLVTEPTPTQSTPTPSEEDLIKALRITADLGVDVAYTEIDIRMRTPSNAQKLQQLADAYYRVARSCMKVPRCVGMTIWGVTDRYSWVPNTFRGEGDALLWDSNYQRKAAYNAFLRGIQEPVN</sequence>
<organism>
    <name type="scientific">Humicola insolens</name>
    <name type="common">Soft-rot fungus</name>
    <dbReference type="NCBI Taxonomy" id="85995"/>
    <lineage>
        <taxon>Eukaryota</taxon>
        <taxon>Fungi</taxon>
        <taxon>Dikarya</taxon>
        <taxon>Ascomycota</taxon>
        <taxon>Pezizomycotina</taxon>
        <taxon>Sordariomycetes</taxon>
        <taxon>Sordariomycetidae</taxon>
        <taxon>Sordariales</taxon>
        <taxon>Chaetomiaceae</taxon>
        <taxon>Mycothermus</taxon>
    </lineage>
</organism>
<proteinExistence type="evidence at protein level"/>
<keyword id="KW-0119">Carbohydrate metabolism</keyword>
<keyword id="KW-0325">Glycoprotein</keyword>
<keyword id="KW-0326">Glycosidase</keyword>
<keyword id="KW-0378">Hydrolase</keyword>
<keyword id="KW-0624">Polysaccharide degradation</keyword>
<keyword id="KW-0964">Secreted</keyword>
<keyword id="KW-0732">Signal</keyword>
<keyword id="KW-0858">Xylan degradation</keyword>
<evidence type="ECO:0000255" key="1"/>
<evidence type="ECO:0000255" key="2">
    <source>
        <dbReference type="PROSITE-ProRule" id="PRU00498"/>
    </source>
</evidence>
<evidence type="ECO:0000255" key="3">
    <source>
        <dbReference type="PROSITE-ProRule" id="PRU01096"/>
    </source>
</evidence>
<evidence type="ECO:0000269" key="4">
    <source>
    </source>
</evidence>
<evidence type="ECO:0000269" key="5">
    <source>
    </source>
</evidence>
<evidence type="ECO:0000303" key="6">
    <source>
    </source>
</evidence>
<evidence type="ECO:0000305" key="7"/>
<evidence type="ECO:0000305" key="8">
    <source>
    </source>
</evidence>
<reference key="1">
    <citation type="journal article" date="2013" name="Bioresour. Technol.">
        <title>Characterization of three novel thermophilic xylanases from Humicola insolens Y1 with application potentials in the brewing industry.</title>
        <authorList>
            <person name="Du Y."/>
            <person name="Shi P."/>
            <person name="Huang H."/>
            <person name="Zhang X."/>
            <person name="Luo H."/>
            <person name="Wang Y."/>
            <person name="Yao B."/>
        </authorList>
    </citation>
    <scope>NUCLEOTIDE SEQUENCE [MRNA]</scope>
    <scope>FUNCTION</scope>
    <scope>CATALYTIC ACTIVITY</scope>
    <scope>BIOPHYSICOCHEMICAL PROPERTIES</scope>
    <scope>SUBSTRATE SPECIFICITY</scope>
    <scope>ACTIVITY REGULATION</scope>
    <scope>BIOTECHNOLOGY</scope>
    <source>
        <strain>Y1</strain>
    </source>
</reference>
<reference key="2">
    <citation type="journal article" date="2019" name="Int. J. Mol. Sci.">
        <title>A novel CreA-mediated regulation mechanism of cellulase expression in the thermophilic fungus Humicola insolens.</title>
        <authorList>
            <person name="Xu X."/>
            <person name="Fan C."/>
            <person name="Song L."/>
            <person name="Li J."/>
            <person name="Chen Y."/>
            <person name="Zhang Y."/>
            <person name="Liu B."/>
            <person name="Zhang W."/>
        </authorList>
    </citation>
    <scope>INDUCTION</scope>
</reference>
<protein>
    <recommendedName>
        <fullName evidence="6">Endo-1,4-beta-xylanase B</fullName>
        <ecNumber evidence="4">3.2.1.8</ecNumber>
    </recommendedName>
    <alternativeName>
        <fullName evidence="7">1,4-beta-D-xylan xylanohydrolase B</fullName>
    </alternativeName>
</protein>
<feature type="signal peptide" evidence="1">
    <location>
        <begin position="1"/>
        <end position="17"/>
    </location>
</feature>
<feature type="chain" id="PRO_5004055463" description="Endo-1,4-beta-xylanase B">
    <location>
        <begin position="18"/>
        <end position="358"/>
    </location>
</feature>
<feature type="domain" description="GH10" evidence="3">
    <location>
        <begin position="40"/>
        <end position="352"/>
    </location>
</feature>
<feature type="active site" description="Proton donor" evidence="3">
    <location>
        <position position="166"/>
    </location>
</feature>
<feature type="active site" description="Nucleophile" evidence="3">
    <location>
        <position position="274"/>
    </location>
</feature>
<feature type="glycosylation site" description="N-linked (GlcNAc...) asparagine" evidence="2">
    <location>
        <position position="136"/>
    </location>
</feature>
<name>XYNB_HUMIN</name>